<organism>
    <name type="scientific">Brevibacillus brevis (strain 47 / JCM 6285 / NBRC 100599)</name>
    <dbReference type="NCBI Taxonomy" id="358681"/>
    <lineage>
        <taxon>Bacteria</taxon>
        <taxon>Bacillati</taxon>
        <taxon>Bacillota</taxon>
        <taxon>Bacilli</taxon>
        <taxon>Bacillales</taxon>
        <taxon>Paenibacillaceae</taxon>
        <taxon>Brevibacillus</taxon>
    </lineage>
</organism>
<keyword id="KW-0030">Aminoacyl-tRNA synthetase</keyword>
<keyword id="KW-0067">ATP-binding</keyword>
<keyword id="KW-0963">Cytoplasm</keyword>
<keyword id="KW-0436">Ligase</keyword>
<keyword id="KW-0547">Nucleotide-binding</keyword>
<keyword id="KW-0648">Protein biosynthesis</keyword>
<keyword id="KW-1185">Reference proteome</keyword>
<proteinExistence type="inferred from homology"/>
<protein>
    <recommendedName>
        <fullName evidence="1">Leucine--tRNA ligase</fullName>
        <ecNumber evidence="1">6.1.1.4</ecNumber>
    </recommendedName>
    <alternativeName>
        <fullName evidence="1">Leucyl-tRNA synthetase</fullName>
        <shortName evidence="1">LeuRS</shortName>
    </alternativeName>
</protein>
<feature type="chain" id="PRO_1000199184" description="Leucine--tRNA ligase">
    <location>
        <begin position="1"/>
        <end position="805"/>
    </location>
</feature>
<feature type="short sequence motif" description="'HIGH' region">
    <location>
        <begin position="40"/>
        <end position="51"/>
    </location>
</feature>
<feature type="short sequence motif" description="'KMSKS' region">
    <location>
        <begin position="576"/>
        <end position="580"/>
    </location>
</feature>
<feature type="binding site" evidence="1">
    <location>
        <position position="579"/>
    </location>
    <ligand>
        <name>ATP</name>
        <dbReference type="ChEBI" id="CHEBI:30616"/>
    </ligand>
</feature>
<sequence length="805" mass="91900">MVFSHRNVEKKWQQYWEQNKTFKTSEDEGKKKFYALDMFPYPSGAGLHVGHPEGYTATDILSRMKRMQGYNVLHPMGWDAFGLPAEQYALDTGNDPAEFTEHNINTFRRQIKSLGFSYDWDREINTTDPHYYKWTQWIFTKLYEHGLAYIDEVAVNWCPALGTVLANEEVIDGKSERGGHPVERRPMKQWVLKITAYAERLLADLDELDWPESIKEMQRNWIGRSEGAEVTFGIEGHDESFTVFTTRPDTLYGATYAVLAPEHKLVEQITVPAQKEAVEAYLDQAKRKSDLERTDLAKEKTGVFTGAYAINPVNGERLPIWIADYVLISYGTGSIMAVPAHDERDYEFAKTFDLPIKQVIAGGDISKEAYAGDGEHINSGMLDGLNKEQAISKMIEWLEAEGKGNRKVTYRLRDWLFSRQRYWGEPIPILHLEDGTMKVVPESELPIMLPKTKEIKPSGTGESPLANIAEWVNTIDPETGMKARRETNTMPQWAGSCWYFLRFIDPHNDKALADPDKLKEWLPIDIYIGGAEHAVLHLLYSRFWHKFLYDIGVVPTKEPFQKLFNQGMILGENNEKMSKSKGNVVNPDDIIDSHGADTLRMYEMFMGPLDASIAWSTKGLDGARRFLDRVYRLFVGDNGELNEKIVETSNVAGMERVYHQTVKKVTEDYEGLRFNTGISQLMVFVNEAYKAEVLPKKFMEDFVKMLSPIAPHLGEELWEKLGHSESVAYAAWPTYDEAKLVEDEVEIVLQINGKNKEKLLIASDSTKEQMEEMAKNNEMINELIEGKTIVKVIAVPGKLVNIVVR</sequence>
<reference key="1">
    <citation type="submission" date="2005-03" db="EMBL/GenBank/DDBJ databases">
        <title>Brevibacillus brevis strain 47, complete genome.</title>
        <authorList>
            <person name="Hosoyama A."/>
            <person name="Yamada R."/>
            <person name="Hongo Y."/>
            <person name="Terui Y."/>
            <person name="Ankai A."/>
            <person name="Masuyama W."/>
            <person name="Sekiguchi M."/>
            <person name="Takeda T."/>
            <person name="Asano K."/>
            <person name="Ohji S."/>
            <person name="Ichikawa N."/>
            <person name="Narita S."/>
            <person name="Aoki N."/>
            <person name="Miura H."/>
            <person name="Matsushita S."/>
            <person name="Sekigawa T."/>
            <person name="Yamagata H."/>
            <person name="Yoshikawa H."/>
            <person name="Udaka S."/>
            <person name="Tanikawa S."/>
            <person name="Fujita N."/>
        </authorList>
    </citation>
    <scope>NUCLEOTIDE SEQUENCE [LARGE SCALE GENOMIC DNA]</scope>
    <source>
        <strain>47 / JCM 6285 / NBRC 100599</strain>
    </source>
</reference>
<dbReference type="EC" id="6.1.1.4" evidence="1"/>
<dbReference type="EMBL" id="AP008955">
    <property type="protein sequence ID" value="BAH42972.1"/>
    <property type="molecule type" value="Genomic_DNA"/>
</dbReference>
<dbReference type="RefSeq" id="WP_012685706.1">
    <property type="nucleotide sequence ID" value="NC_012491.1"/>
</dbReference>
<dbReference type="SMR" id="C0ZB13"/>
<dbReference type="STRING" id="358681.BBR47_19950"/>
<dbReference type="KEGG" id="bbe:BBR47_19950"/>
<dbReference type="eggNOG" id="COG0495">
    <property type="taxonomic scope" value="Bacteria"/>
</dbReference>
<dbReference type="HOGENOM" id="CLU_004427_0_0_9"/>
<dbReference type="Proteomes" id="UP000001877">
    <property type="component" value="Chromosome"/>
</dbReference>
<dbReference type="GO" id="GO:0005829">
    <property type="term" value="C:cytosol"/>
    <property type="evidence" value="ECO:0007669"/>
    <property type="project" value="TreeGrafter"/>
</dbReference>
<dbReference type="GO" id="GO:0002161">
    <property type="term" value="F:aminoacyl-tRNA deacylase activity"/>
    <property type="evidence" value="ECO:0007669"/>
    <property type="project" value="InterPro"/>
</dbReference>
<dbReference type="GO" id="GO:0005524">
    <property type="term" value="F:ATP binding"/>
    <property type="evidence" value="ECO:0007669"/>
    <property type="project" value="UniProtKB-UniRule"/>
</dbReference>
<dbReference type="GO" id="GO:0004823">
    <property type="term" value="F:leucine-tRNA ligase activity"/>
    <property type="evidence" value="ECO:0007669"/>
    <property type="project" value="UniProtKB-UniRule"/>
</dbReference>
<dbReference type="GO" id="GO:0006429">
    <property type="term" value="P:leucyl-tRNA aminoacylation"/>
    <property type="evidence" value="ECO:0007669"/>
    <property type="project" value="UniProtKB-UniRule"/>
</dbReference>
<dbReference type="CDD" id="cd07958">
    <property type="entry name" value="Anticodon_Ia_Leu_BEm"/>
    <property type="match status" value="1"/>
</dbReference>
<dbReference type="CDD" id="cd00812">
    <property type="entry name" value="LeuRS_core"/>
    <property type="match status" value="1"/>
</dbReference>
<dbReference type="FunFam" id="1.10.730.10:FF:000018">
    <property type="entry name" value="Leucine--tRNA ligase"/>
    <property type="match status" value="1"/>
</dbReference>
<dbReference type="FunFam" id="3.10.20.590:FF:000001">
    <property type="entry name" value="Leucine--tRNA ligase"/>
    <property type="match status" value="1"/>
</dbReference>
<dbReference type="FunFam" id="3.40.50.620:FF:000056">
    <property type="entry name" value="Leucine--tRNA ligase"/>
    <property type="match status" value="1"/>
</dbReference>
<dbReference type="FunFam" id="3.40.50.620:FF:000077">
    <property type="entry name" value="Leucine--tRNA ligase"/>
    <property type="match status" value="1"/>
</dbReference>
<dbReference type="FunFam" id="3.90.740.10:FF:000017">
    <property type="entry name" value="Leucine--tRNA ligase"/>
    <property type="match status" value="1"/>
</dbReference>
<dbReference type="Gene3D" id="3.10.20.590">
    <property type="match status" value="1"/>
</dbReference>
<dbReference type="Gene3D" id="3.40.50.620">
    <property type="entry name" value="HUPs"/>
    <property type="match status" value="2"/>
</dbReference>
<dbReference type="Gene3D" id="1.10.730.10">
    <property type="entry name" value="Isoleucyl-tRNA Synthetase, Domain 1"/>
    <property type="match status" value="1"/>
</dbReference>
<dbReference type="HAMAP" id="MF_00049_B">
    <property type="entry name" value="Leu_tRNA_synth_B"/>
    <property type="match status" value="1"/>
</dbReference>
<dbReference type="InterPro" id="IPR001412">
    <property type="entry name" value="aa-tRNA-synth_I_CS"/>
</dbReference>
<dbReference type="InterPro" id="IPR002300">
    <property type="entry name" value="aa-tRNA-synth_Ia"/>
</dbReference>
<dbReference type="InterPro" id="IPR002302">
    <property type="entry name" value="Leu-tRNA-ligase"/>
</dbReference>
<dbReference type="InterPro" id="IPR025709">
    <property type="entry name" value="Leu_tRNA-synth_edit"/>
</dbReference>
<dbReference type="InterPro" id="IPR013155">
    <property type="entry name" value="M/V/L/I-tRNA-synth_anticd-bd"/>
</dbReference>
<dbReference type="InterPro" id="IPR015413">
    <property type="entry name" value="Methionyl/Leucyl_tRNA_Synth"/>
</dbReference>
<dbReference type="InterPro" id="IPR014729">
    <property type="entry name" value="Rossmann-like_a/b/a_fold"/>
</dbReference>
<dbReference type="InterPro" id="IPR009080">
    <property type="entry name" value="tRNAsynth_Ia_anticodon-bd"/>
</dbReference>
<dbReference type="InterPro" id="IPR009008">
    <property type="entry name" value="Val/Leu/Ile-tRNA-synth_edit"/>
</dbReference>
<dbReference type="NCBIfam" id="TIGR00396">
    <property type="entry name" value="leuS_bact"/>
    <property type="match status" value="1"/>
</dbReference>
<dbReference type="PANTHER" id="PTHR43740:SF2">
    <property type="entry name" value="LEUCINE--TRNA LIGASE, MITOCHONDRIAL"/>
    <property type="match status" value="1"/>
</dbReference>
<dbReference type="PANTHER" id="PTHR43740">
    <property type="entry name" value="LEUCYL-TRNA SYNTHETASE"/>
    <property type="match status" value="1"/>
</dbReference>
<dbReference type="Pfam" id="PF08264">
    <property type="entry name" value="Anticodon_1"/>
    <property type="match status" value="1"/>
</dbReference>
<dbReference type="Pfam" id="PF00133">
    <property type="entry name" value="tRNA-synt_1"/>
    <property type="match status" value="1"/>
</dbReference>
<dbReference type="Pfam" id="PF13603">
    <property type="entry name" value="tRNA-synt_1_2"/>
    <property type="match status" value="1"/>
</dbReference>
<dbReference type="Pfam" id="PF09334">
    <property type="entry name" value="tRNA-synt_1g"/>
    <property type="match status" value="1"/>
</dbReference>
<dbReference type="PRINTS" id="PR00985">
    <property type="entry name" value="TRNASYNTHLEU"/>
</dbReference>
<dbReference type="SUPFAM" id="SSF47323">
    <property type="entry name" value="Anticodon-binding domain of a subclass of class I aminoacyl-tRNA synthetases"/>
    <property type="match status" value="1"/>
</dbReference>
<dbReference type="SUPFAM" id="SSF52374">
    <property type="entry name" value="Nucleotidylyl transferase"/>
    <property type="match status" value="1"/>
</dbReference>
<dbReference type="SUPFAM" id="SSF50677">
    <property type="entry name" value="ValRS/IleRS/LeuRS editing domain"/>
    <property type="match status" value="1"/>
</dbReference>
<dbReference type="PROSITE" id="PS00178">
    <property type="entry name" value="AA_TRNA_LIGASE_I"/>
    <property type="match status" value="1"/>
</dbReference>
<name>SYL_BREBN</name>
<gene>
    <name evidence="1" type="primary">leuS</name>
    <name type="ordered locus">BBR47_19950</name>
</gene>
<evidence type="ECO:0000255" key="1">
    <source>
        <dbReference type="HAMAP-Rule" id="MF_00049"/>
    </source>
</evidence>
<accession>C0ZB13</accession>
<comment type="catalytic activity">
    <reaction evidence="1">
        <text>tRNA(Leu) + L-leucine + ATP = L-leucyl-tRNA(Leu) + AMP + diphosphate</text>
        <dbReference type="Rhea" id="RHEA:11688"/>
        <dbReference type="Rhea" id="RHEA-COMP:9613"/>
        <dbReference type="Rhea" id="RHEA-COMP:9622"/>
        <dbReference type="ChEBI" id="CHEBI:30616"/>
        <dbReference type="ChEBI" id="CHEBI:33019"/>
        <dbReference type="ChEBI" id="CHEBI:57427"/>
        <dbReference type="ChEBI" id="CHEBI:78442"/>
        <dbReference type="ChEBI" id="CHEBI:78494"/>
        <dbReference type="ChEBI" id="CHEBI:456215"/>
        <dbReference type="EC" id="6.1.1.4"/>
    </reaction>
</comment>
<comment type="subcellular location">
    <subcellularLocation>
        <location evidence="1">Cytoplasm</location>
    </subcellularLocation>
</comment>
<comment type="similarity">
    <text evidence="1">Belongs to the class-I aminoacyl-tRNA synthetase family.</text>
</comment>